<feature type="chain" id="PRO_0000019470" description="Pro-neuregulin-1, membrane-bound isoform" evidence="1">
    <location>
        <begin position="1"/>
        <end position="677"/>
    </location>
</feature>
<feature type="chain" id="PRO_0000019471" description="Neuregulin-1" evidence="1">
    <location>
        <begin position="1"/>
        <end position="259"/>
    </location>
</feature>
<feature type="topological domain" description="Extracellular" evidence="2">
    <location>
        <begin position="1"/>
        <end position="260"/>
    </location>
</feature>
<feature type="transmembrane region" description="Helical; Note=Internal signal sequence" evidence="2">
    <location>
        <begin position="261"/>
        <end position="280"/>
    </location>
</feature>
<feature type="topological domain" description="Cytoplasmic" evidence="2">
    <location>
        <begin position="281"/>
        <end position="677"/>
    </location>
</feature>
<feature type="domain" description="Ig-like C2-type">
    <location>
        <begin position="37"/>
        <end position="132"/>
    </location>
</feature>
<feature type="domain" description="EGF-like" evidence="3">
    <location>
        <begin position="188"/>
        <end position="232"/>
    </location>
</feature>
<feature type="region of interest" description="Disordered" evidence="4">
    <location>
        <begin position="1"/>
        <end position="43"/>
    </location>
</feature>
<feature type="region of interest" description="Disordered" evidence="4">
    <location>
        <begin position="78"/>
        <end position="106"/>
    </location>
</feature>
<feature type="region of interest" description="Disordered" evidence="4">
    <location>
        <begin position="294"/>
        <end position="326"/>
    </location>
</feature>
<feature type="region of interest" description="Disordered" evidence="4">
    <location>
        <begin position="350"/>
        <end position="375"/>
    </location>
</feature>
<feature type="region of interest" description="Disordered" evidence="4">
    <location>
        <begin position="397"/>
        <end position="418"/>
    </location>
</feature>
<feature type="region of interest" description="Disordered" evidence="4">
    <location>
        <begin position="457"/>
        <end position="479"/>
    </location>
</feature>
<feature type="region of interest" description="Disordered" evidence="4">
    <location>
        <begin position="503"/>
        <end position="617"/>
    </location>
</feature>
<feature type="compositionally biased region" description="Basic and acidic residues" evidence="4">
    <location>
        <begin position="1"/>
        <end position="12"/>
    </location>
</feature>
<feature type="compositionally biased region" description="Basic residues" evidence="4">
    <location>
        <begin position="13"/>
        <end position="24"/>
    </location>
</feature>
<feature type="compositionally biased region" description="Basic and acidic residues" evidence="4">
    <location>
        <begin position="78"/>
        <end position="91"/>
    </location>
</feature>
<feature type="compositionally biased region" description="Basic and acidic residues" evidence="4">
    <location>
        <begin position="294"/>
        <end position="315"/>
    </location>
</feature>
<feature type="compositionally biased region" description="Low complexity" evidence="4">
    <location>
        <begin position="351"/>
        <end position="375"/>
    </location>
</feature>
<feature type="compositionally biased region" description="Polar residues" evidence="4">
    <location>
        <begin position="397"/>
        <end position="407"/>
    </location>
</feature>
<feature type="compositionally biased region" description="Basic and acidic residues" evidence="4">
    <location>
        <begin position="505"/>
        <end position="515"/>
    </location>
</feature>
<feature type="compositionally biased region" description="Basic residues" evidence="4">
    <location>
        <begin position="568"/>
        <end position="578"/>
    </location>
</feature>
<feature type="compositionally biased region" description="Low complexity" evidence="4">
    <location>
        <begin position="591"/>
        <end position="600"/>
    </location>
</feature>
<feature type="glycosylation site" description="N-linked (GlcNAc...) asparagine" evidence="2">
    <location>
        <position position="124"/>
    </location>
</feature>
<feature type="glycosylation site" description="N-linked (GlcNAc...) asparagine" evidence="2">
    <location>
        <position position="130"/>
    </location>
</feature>
<feature type="disulfide bond" evidence="1">
    <location>
        <begin position="57"/>
        <end position="116"/>
    </location>
</feature>
<feature type="disulfide bond" evidence="1">
    <location>
        <begin position="192"/>
        <end position="206"/>
    </location>
</feature>
<feature type="disulfide bond" evidence="1">
    <location>
        <begin position="200"/>
        <end position="220"/>
    </location>
</feature>
<feature type="disulfide bond" evidence="1">
    <location>
        <begin position="222"/>
        <end position="231"/>
    </location>
</feature>
<feature type="splice variant" id="VSP_003449" description="In isoform CRD." evidence="5">
    <original>MAEKKKVKEGKGRKGKGKKDRKGKKAEGSDQGAAASPKLKEIKTQSVQEGKKLVLKCQAVSEQPSLKFRWFKGEKEIGAKNKPDSKPEHIKIRGKKKSSELQISKASSADNGEYKCMVSNQLGNDTVTVNVTIVPK</original>
    <variation>MSEDTAEGLQNQCSEQSSDPPSAELQNEESMPETQDEEETTHGITGLAITCCVCLEADRLRICLNSEKICIIPILACLISLCLCIAGLKWVFVDKIFEYDSPTHLDPGHRGQDLILYTDTAPSTLVPSSVRTLPVIIPTTDSKAAVTFKFGTSLLPTE</variation>
    <location>
        <begin position="1"/>
        <end position="136"/>
    </location>
</feature>
<feature type="splice variant" id="VSP_003450" description="In isoform CRD." evidence="5">
    <original>KPGFTGARCTETDPLRVVRSEKHLGIEFME</original>
    <variation>PNEFTGDRCQNYVMASFYK</variation>
    <location>
        <begin position="223"/>
        <end position="252"/>
    </location>
</feature>
<keyword id="KW-0025">Alternative splicing</keyword>
<keyword id="KW-1003">Cell membrane</keyword>
<keyword id="KW-1015">Disulfide bond</keyword>
<keyword id="KW-0245">EGF-like domain</keyword>
<keyword id="KW-0325">Glycoprotein</keyword>
<keyword id="KW-0339">Growth factor</keyword>
<keyword id="KW-0393">Immunoglobulin domain</keyword>
<keyword id="KW-0472">Membrane</keyword>
<keyword id="KW-1185">Reference proteome</keyword>
<keyword id="KW-0964">Secreted</keyword>
<keyword id="KW-0812">Transmembrane</keyword>
<keyword id="KW-1133">Transmembrane helix</keyword>
<dbReference type="EMBL" id="AF076618">
    <property type="protein sequence ID" value="AAC26804.1"/>
    <property type="molecule type" value="mRNA"/>
</dbReference>
<dbReference type="EMBL" id="AF142632">
    <property type="protein sequence ID" value="AAD33893.1"/>
    <property type="molecule type" value="mRNA"/>
</dbReference>
<dbReference type="RefSeq" id="NP_001079063.1">
    <molecule id="O93383-2"/>
    <property type="nucleotide sequence ID" value="NM_001085594.1"/>
</dbReference>
<dbReference type="SMR" id="O93383"/>
<dbReference type="GlyCosmos" id="O93383">
    <property type="glycosylation" value="2 sites, No reported glycans"/>
</dbReference>
<dbReference type="GeneID" id="373595"/>
<dbReference type="CTD" id="373595"/>
<dbReference type="Proteomes" id="UP000186698">
    <property type="component" value="Unplaced"/>
</dbReference>
<dbReference type="GO" id="GO:0005615">
    <property type="term" value="C:extracellular space"/>
    <property type="evidence" value="ECO:0000318"/>
    <property type="project" value="GO_Central"/>
</dbReference>
<dbReference type="GO" id="GO:0005886">
    <property type="term" value="C:plasma membrane"/>
    <property type="evidence" value="ECO:0007669"/>
    <property type="project" value="UniProtKB-SubCell"/>
</dbReference>
<dbReference type="GO" id="GO:0045499">
    <property type="term" value="F:chemorepellent activity"/>
    <property type="evidence" value="ECO:0000318"/>
    <property type="project" value="GO_Central"/>
</dbReference>
<dbReference type="GO" id="GO:0008083">
    <property type="term" value="F:growth factor activity"/>
    <property type="evidence" value="ECO:0007669"/>
    <property type="project" value="UniProtKB-KW"/>
</dbReference>
<dbReference type="GO" id="GO:0030296">
    <property type="term" value="F:protein tyrosine kinase activator activity"/>
    <property type="evidence" value="ECO:0000318"/>
    <property type="project" value="GO_Central"/>
</dbReference>
<dbReference type="GO" id="GO:0007420">
    <property type="term" value="P:brain development"/>
    <property type="evidence" value="ECO:0000318"/>
    <property type="project" value="GO_Central"/>
</dbReference>
<dbReference type="GO" id="GO:0030154">
    <property type="term" value="P:cell differentiation"/>
    <property type="evidence" value="ECO:0000318"/>
    <property type="project" value="GO_Central"/>
</dbReference>
<dbReference type="GO" id="GO:0038133">
    <property type="term" value="P:ERBB2-ERBB3 signaling pathway"/>
    <property type="evidence" value="ECO:0000318"/>
    <property type="project" value="GO_Central"/>
</dbReference>
<dbReference type="GO" id="GO:0038130">
    <property type="term" value="P:ERBB4 signaling pathway"/>
    <property type="evidence" value="ECO:0000318"/>
    <property type="project" value="GO_Central"/>
</dbReference>
<dbReference type="GO" id="GO:0035556">
    <property type="term" value="P:intracellular signal transduction"/>
    <property type="evidence" value="ECO:0000318"/>
    <property type="project" value="GO_Central"/>
</dbReference>
<dbReference type="GO" id="GO:0007422">
    <property type="term" value="P:peripheral nervous system development"/>
    <property type="evidence" value="ECO:0000318"/>
    <property type="project" value="GO_Central"/>
</dbReference>
<dbReference type="CDD" id="cd00054">
    <property type="entry name" value="EGF_CA"/>
    <property type="match status" value="1"/>
</dbReference>
<dbReference type="FunFam" id="2.60.40.10:FF:000107">
    <property type="entry name" value="Myosin, light chain kinase a"/>
    <property type="match status" value="1"/>
</dbReference>
<dbReference type="Gene3D" id="2.60.40.10">
    <property type="entry name" value="Immunoglobulins"/>
    <property type="match status" value="1"/>
</dbReference>
<dbReference type="Gene3D" id="2.10.25.10">
    <property type="entry name" value="Laminin"/>
    <property type="match status" value="1"/>
</dbReference>
<dbReference type="InterPro" id="IPR000742">
    <property type="entry name" value="EGF-like_dom"/>
</dbReference>
<dbReference type="InterPro" id="IPR007110">
    <property type="entry name" value="Ig-like_dom"/>
</dbReference>
<dbReference type="InterPro" id="IPR036179">
    <property type="entry name" value="Ig-like_dom_sf"/>
</dbReference>
<dbReference type="InterPro" id="IPR013783">
    <property type="entry name" value="Ig-like_fold"/>
</dbReference>
<dbReference type="InterPro" id="IPR013098">
    <property type="entry name" value="Ig_I-set"/>
</dbReference>
<dbReference type="InterPro" id="IPR003599">
    <property type="entry name" value="Ig_sub"/>
</dbReference>
<dbReference type="InterPro" id="IPR003598">
    <property type="entry name" value="Ig_sub2"/>
</dbReference>
<dbReference type="InterPro" id="IPR040180">
    <property type="entry name" value="Neuregulin"/>
</dbReference>
<dbReference type="InterPro" id="IPR002154">
    <property type="entry name" value="Neuregulin_C"/>
</dbReference>
<dbReference type="InterPro" id="IPR018250">
    <property type="entry name" value="NRG1"/>
</dbReference>
<dbReference type="PANTHER" id="PTHR11100">
    <property type="entry name" value="HEREGULIN-NEUREGULIN FAMILY MEMBER"/>
    <property type="match status" value="1"/>
</dbReference>
<dbReference type="PANTHER" id="PTHR11100:SF7">
    <property type="entry name" value="PRO-NEUREGULIN-1, MEMBRANE-BOUND ISOFORM"/>
    <property type="match status" value="1"/>
</dbReference>
<dbReference type="Pfam" id="PF07679">
    <property type="entry name" value="I-set"/>
    <property type="match status" value="1"/>
</dbReference>
<dbReference type="Pfam" id="PF02158">
    <property type="entry name" value="Neuregulin"/>
    <property type="match status" value="1"/>
</dbReference>
<dbReference type="PRINTS" id="PR01089">
    <property type="entry name" value="NEUREGULIN"/>
</dbReference>
<dbReference type="SMART" id="SM00181">
    <property type="entry name" value="EGF"/>
    <property type="match status" value="1"/>
</dbReference>
<dbReference type="SMART" id="SM00409">
    <property type="entry name" value="IG"/>
    <property type="match status" value="1"/>
</dbReference>
<dbReference type="SMART" id="SM00408">
    <property type="entry name" value="IGc2"/>
    <property type="match status" value="1"/>
</dbReference>
<dbReference type="SUPFAM" id="SSF57196">
    <property type="entry name" value="EGF/Laminin"/>
    <property type="match status" value="1"/>
</dbReference>
<dbReference type="SUPFAM" id="SSF48726">
    <property type="entry name" value="Immunoglobulin"/>
    <property type="match status" value="1"/>
</dbReference>
<dbReference type="PROSITE" id="PS00022">
    <property type="entry name" value="EGF_1"/>
    <property type="match status" value="1"/>
</dbReference>
<dbReference type="PROSITE" id="PS01186">
    <property type="entry name" value="EGF_2"/>
    <property type="match status" value="1"/>
</dbReference>
<dbReference type="PROSITE" id="PS50026">
    <property type="entry name" value="EGF_3"/>
    <property type="match status" value="1"/>
</dbReference>
<dbReference type="PROSITE" id="PS50835">
    <property type="entry name" value="IG_LIKE"/>
    <property type="match status" value="1"/>
</dbReference>
<reference key="1">
    <citation type="journal article" date="1998" name="Brain Res. Mol. Brain Res.">
        <title>Cloning of cDNAs encoding Xenopus neuregulin: expression in myotomal muscle during embryo development.</title>
        <authorList>
            <person name="Yang J.F."/>
            <person name="Zhou H."/>
            <person name="Pun S."/>
            <person name="Ip N.Y."/>
            <person name="Peng H.B."/>
            <person name="Tsim K.W.K."/>
        </authorList>
    </citation>
    <scope>NUCLEOTIDE SEQUENCE [MRNA] (ISOFORM ALPHA1)</scope>
    <scope>ALTERNATIVE SPLICING</scope>
</reference>
<reference key="2">
    <citation type="journal article" date="1999" name="Mol. Cell. Neurosci.">
        <title>A cysteine-rich form of Xenopus neuregulin induces the expression of acetylcholine receptors in cultured myotubes.</title>
        <authorList>
            <person name="Yang J.F."/>
            <person name="Zhou H."/>
            <person name="Choi R.C."/>
            <person name="Ip N.Y."/>
            <person name="Peng H.B."/>
            <person name="Tsim K.W.K."/>
        </authorList>
    </citation>
    <scope>NUCLEOTIDE SEQUENCE [MRNA] (ISOFORM CRD)</scope>
</reference>
<sequence length="677" mass="75795">MAEKKKVKEGKGRKGKGKKDRKGKKAEGSDQGAAASPKLKEIKTQSVQEGKKLVLKCQAVSEQPSLKFRWFKGEKEIGAKNKPDSKPEHIKIRGKKKSSELQISKASSADNGEYKCMVSNQLGNDTVTVNVTIVPKPTYNHLLLMKIYLKVTSVEKSVEPSTLNLLESQKEVIFATTKRGDTTAGPGHLIKCSDKEKTYCVNGGECYVLNGITSSNQFMCKCKPGFTGARCTETDPLRVVRSEKHLGIEFMEAEELYQKRVLTITGICIDLLVVGDMCVVDAYCKTKKQRKKLNDRLRQSLRERNKNITNKDNRPHNPKNPPPRKNVQLVNQYVSKNVISSEHVIERETETSFSTSHYTSTTHHSTTVTQTPSHSWSNGLSESMISEKSYSVIVTSSVENSRHTSPTGPRGRLNGIGGPRDCSYLRHARDTPDSYRDSPHSERYVSAMTTPARMSPVEFKTPISPKSPCLETSPPESSLAVSVPSVAVSPFIEEERPLLLVSPPRLREKRYDRKTPQKTPHKQHNSYHHNPGHDSSSLPPNPLRIVEDEEYETTQEYEPSLEPAKKLVNSRRQKRTKPNGHISNRLELDSDSSSESSTSESETEDERIGEETPFLSIQNPLAASLESASLYRHADSRTNPTSRFSTQEELQARLSSIANQALCDQKKRKMTCKTLFI</sequence>
<comment type="function">
    <text>Direct ligand for the ERBB tyrosine kinase receptors. Induces expression of acetylcholine receptor in synaptic nuclei.</text>
</comment>
<comment type="subcellular location">
    <molecule>Pro-neuregulin-1, membrane-bound isoform</molecule>
    <subcellularLocation>
        <location evidence="1">Cell membrane</location>
        <topology evidence="1">Single-pass type I membrane protein</topology>
    </subcellularLocation>
    <text evidence="1">Does not seem to be active.</text>
</comment>
<comment type="subcellular location">
    <molecule>Neuregulin-1</molecule>
    <subcellularLocation>
        <location evidence="1">Secreted</location>
    </subcellularLocation>
</comment>
<comment type="alternative products">
    <event type="alternative splicing"/>
    <isoform>
        <id>O93383-1</id>
        <name>Alpha1</name>
        <sequence type="displayed"/>
    </isoform>
    <isoform>
        <id>O93383-2</id>
        <name>CRD</name>
        <name>CRD-NRG1</name>
        <name>Cysteine-rich domain</name>
        <sequence type="described" ref="VSP_003449 VSP_003450"/>
    </isoform>
    <text>Additional isoforms seem to exist. Isoforms have alpha- or beta-type EGF-like domains.</text>
</comment>
<comment type="tissue specificity">
    <text>Isoform alpha1 is expressed in brain and muscle. Isoform CRD is expressed in brain and spinal cord, but at very low level in muscle.</text>
</comment>
<comment type="developmental stage">
    <text>Strong expression in developing brain and spinal cord of the embryo. Also expressed in the myotomal muscle.</text>
</comment>
<comment type="domain">
    <text evidence="1">The cytoplasmic domain may be involved in the regulation of trafficking and proteolytic processing. Regulation of the proteolytic processing involves initial intracellular domain dimerization (By similarity).</text>
</comment>
<comment type="domain">
    <text>ERBB receptor binding is elicited entirely by the EGF-like domain.</text>
</comment>
<comment type="PTM">
    <text>Proteolytic cleavage close to the plasma membrane on the external face leads to the release of the soluble growth factor form.</text>
</comment>
<comment type="PTM">
    <text evidence="1">Extensive glycosylation precedes the proteolytic cleavage.</text>
</comment>
<comment type="similarity">
    <text evidence="6">Belongs to the neuregulin family.</text>
</comment>
<proteinExistence type="evidence at transcript level"/>
<organism>
    <name type="scientific">Xenopus laevis</name>
    <name type="common">African clawed frog</name>
    <dbReference type="NCBI Taxonomy" id="8355"/>
    <lineage>
        <taxon>Eukaryota</taxon>
        <taxon>Metazoa</taxon>
        <taxon>Chordata</taxon>
        <taxon>Craniata</taxon>
        <taxon>Vertebrata</taxon>
        <taxon>Euteleostomi</taxon>
        <taxon>Amphibia</taxon>
        <taxon>Batrachia</taxon>
        <taxon>Anura</taxon>
        <taxon>Pipoidea</taxon>
        <taxon>Pipidae</taxon>
        <taxon>Xenopodinae</taxon>
        <taxon>Xenopus</taxon>
        <taxon>Xenopus</taxon>
    </lineage>
</organism>
<evidence type="ECO:0000250" key="1"/>
<evidence type="ECO:0000255" key="2"/>
<evidence type="ECO:0000255" key="3">
    <source>
        <dbReference type="PROSITE-ProRule" id="PRU00076"/>
    </source>
</evidence>
<evidence type="ECO:0000256" key="4">
    <source>
        <dbReference type="SAM" id="MobiDB-lite"/>
    </source>
</evidence>
<evidence type="ECO:0000303" key="5">
    <source>
    </source>
</evidence>
<evidence type="ECO:0000305" key="6"/>
<name>NRG1_XENLA</name>
<accession>O93383</accession>
<accession>Q9W6N0</accession>
<gene>
    <name type="primary">nrg1</name>
</gene>
<protein>
    <recommendedName>
        <fullName>Pro-neuregulin-1, membrane-bound isoform</fullName>
        <shortName>Pro-NRG1</shortName>
    </recommendedName>
    <component>
        <recommendedName>
            <fullName>Neuregulin-1</fullName>
        </recommendedName>
    </component>
</protein>